<dbReference type="EC" id="1.2.4.1"/>
<dbReference type="EMBL" id="U21214">
    <property type="protein sequence ID" value="AAA86507.1"/>
    <property type="molecule type" value="mRNA"/>
</dbReference>
<dbReference type="EMBL" id="AC007258">
    <property type="protein sequence ID" value="AAD39331.1"/>
    <property type="molecule type" value="Genomic_DNA"/>
</dbReference>
<dbReference type="EMBL" id="CP002684">
    <property type="protein sequence ID" value="AEE33638.1"/>
    <property type="molecule type" value="Genomic_DNA"/>
</dbReference>
<dbReference type="EMBL" id="AF360306">
    <property type="protein sequence ID" value="AAK26016.1"/>
    <property type="molecule type" value="mRNA"/>
</dbReference>
<dbReference type="EMBL" id="BT000974">
    <property type="protein sequence ID" value="AAN41374.1"/>
    <property type="molecule type" value="mRNA"/>
</dbReference>
<dbReference type="EMBL" id="AY087667">
    <property type="protein sequence ID" value="AAM65205.1"/>
    <property type="molecule type" value="mRNA"/>
</dbReference>
<dbReference type="PIR" id="B96623">
    <property type="entry name" value="B96623"/>
</dbReference>
<dbReference type="PIR" id="JC4358">
    <property type="entry name" value="JC4358"/>
</dbReference>
<dbReference type="RefSeq" id="NP_176198.1">
    <property type="nucleotide sequence ID" value="NM_104682.3"/>
</dbReference>
<dbReference type="SMR" id="P52901"/>
<dbReference type="BioGRID" id="27509">
    <property type="interactions" value="7"/>
</dbReference>
<dbReference type="FunCoup" id="P52901">
    <property type="interactions" value="2959"/>
</dbReference>
<dbReference type="IntAct" id="P52901">
    <property type="interactions" value="1"/>
</dbReference>
<dbReference type="STRING" id="3702.P52901"/>
<dbReference type="iPTMnet" id="P52901"/>
<dbReference type="MetOSite" id="P52901"/>
<dbReference type="PaxDb" id="3702-AT1G59900.1"/>
<dbReference type="ProteomicsDB" id="250787"/>
<dbReference type="EnsemblPlants" id="AT1G59900.1">
    <property type="protein sequence ID" value="AT1G59900.1"/>
    <property type="gene ID" value="AT1G59900"/>
</dbReference>
<dbReference type="GeneID" id="842284"/>
<dbReference type="Gramene" id="AT1G59900.1">
    <property type="protein sequence ID" value="AT1G59900.1"/>
    <property type="gene ID" value="AT1G59900"/>
</dbReference>
<dbReference type="KEGG" id="ath:AT1G59900"/>
<dbReference type="Araport" id="AT1G59900"/>
<dbReference type="TAIR" id="AT1G59900">
    <property type="gene designation" value="E1 ALPHA"/>
</dbReference>
<dbReference type="eggNOG" id="KOG0225">
    <property type="taxonomic scope" value="Eukaryota"/>
</dbReference>
<dbReference type="HOGENOM" id="CLU_029393_5_0_1"/>
<dbReference type="InParanoid" id="P52901"/>
<dbReference type="OrthoDB" id="10256198at2759"/>
<dbReference type="PhylomeDB" id="P52901"/>
<dbReference type="BioCyc" id="ARA:AT1G59900-MONOMER"/>
<dbReference type="CD-CODE" id="4299E36E">
    <property type="entry name" value="Nucleolus"/>
</dbReference>
<dbReference type="PRO" id="PR:P52901"/>
<dbReference type="Proteomes" id="UP000006548">
    <property type="component" value="Chromosome 1"/>
</dbReference>
<dbReference type="ExpressionAtlas" id="P52901">
    <property type="expression patterns" value="baseline and differential"/>
</dbReference>
<dbReference type="GO" id="GO:0005829">
    <property type="term" value="C:cytosol"/>
    <property type="evidence" value="ECO:0007005"/>
    <property type="project" value="TAIR"/>
</dbReference>
<dbReference type="GO" id="GO:0005759">
    <property type="term" value="C:mitochondrial matrix"/>
    <property type="evidence" value="ECO:0007669"/>
    <property type="project" value="UniProtKB-SubCell"/>
</dbReference>
<dbReference type="GO" id="GO:0005739">
    <property type="term" value="C:mitochondrion"/>
    <property type="evidence" value="ECO:0007005"/>
    <property type="project" value="TAIR"/>
</dbReference>
<dbReference type="GO" id="GO:0005634">
    <property type="term" value="C:nucleus"/>
    <property type="evidence" value="ECO:0007005"/>
    <property type="project" value="TAIR"/>
</dbReference>
<dbReference type="GO" id="GO:0046872">
    <property type="term" value="F:metal ion binding"/>
    <property type="evidence" value="ECO:0007669"/>
    <property type="project" value="UniProtKB-KW"/>
</dbReference>
<dbReference type="GO" id="GO:0004739">
    <property type="term" value="F:pyruvate dehydrogenase (acetyl-transferring) activity"/>
    <property type="evidence" value="ECO:0007669"/>
    <property type="project" value="UniProtKB-EC"/>
</dbReference>
<dbReference type="GO" id="GO:0006086">
    <property type="term" value="P:pyruvate decarboxylation to acetyl-CoA"/>
    <property type="evidence" value="ECO:0007669"/>
    <property type="project" value="InterPro"/>
</dbReference>
<dbReference type="GO" id="GO:0046686">
    <property type="term" value="P:response to cadmium ion"/>
    <property type="evidence" value="ECO:0000270"/>
    <property type="project" value="TAIR"/>
</dbReference>
<dbReference type="CDD" id="cd02000">
    <property type="entry name" value="TPP_E1_PDC_ADC_BCADC"/>
    <property type="match status" value="1"/>
</dbReference>
<dbReference type="FunFam" id="3.40.50.970:FF:000013">
    <property type="entry name" value="Pyruvate dehydrogenase E1 component subunit alpha"/>
    <property type="match status" value="1"/>
</dbReference>
<dbReference type="Gene3D" id="3.40.50.970">
    <property type="match status" value="1"/>
</dbReference>
<dbReference type="InterPro" id="IPR001017">
    <property type="entry name" value="DH_E1"/>
</dbReference>
<dbReference type="InterPro" id="IPR050642">
    <property type="entry name" value="PDH_E1_Alpha_Subunit"/>
</dbReference>
<dbReference type="InterPro" id="IPR017597">
    <property type="entry name" value="Pyrv_DH_E1_asu_subgrp-y"/>
</dbReference>
<dbReference type="InterPro" id="IPR029061">
    <property type="entry name" value="THDP-binding"/>
</dbReference>
<dbReference type="NCBIfam" id="TIGR03182">
    <property type="entry name" value="PDH_E1_alph_y"/>
    <property type="match status" value="1"/>
</dbReference>
<dbReference type="PANTHER" id="PTHR11516:SF60">
    <property type="entry name" value="PYRUVATE DEHYDROGENASE E1 COMPONENT SUBUNIT ALPHA"/>
    <property type="match status" value="1"/>
</dbReference>
<dbReference type="PANTHER" id="PTHR11516">
    <property type="entry name" value="PYRUVATE DEHYDROGENASE E1 COMPONENT, ALPHA SUBUNIT BACTERIAL AND ORGANELLAR"/>
    <property type="match status" value="1"/>
</dbReference>
<dbReference type="Pfam" id="PF00676">
    <property type="entry name" value="E1_dh"/>
    <property type="match status" value="1"/>
</dbReference>
<dbReference type="SUPFAM" id="SSF52518">
    <property type="entry name" value="Thiamin diphosphate-binding fold (THDP-binding)"/>
    <property type="match status" value="1"/>
</dbReference>
<feature type="transit peptide" description="Mitochondrion" evidence="3">
    <location>
        <begin position="1"/>
        <end position="32"/>
    </location>
</feature>
<feature type="chain" id="PRO_0000020453" description="Pyruvate dehydrogenase E1 component subunit alpha-1, mitochondrial">
    <location>
        <begin position="33"/>
        <end position="389"/>
    </location>
</feature>
<feature type="binding site" evidence="2">
    <location>
        <position position="90"/>
    </location>
    <ligand>
        <name>pyruvate</name>
        <dbReference type="ChEBI" id="CHEBI:15361"/>
    </ligand>
</feature>
<feature type="binding site" evidence="2">
    <location>
        <position position="116"/>
    </location>
    <ligand>
        <name>pyruvate</name>
        <dbReference type="ChEBI" id="CHEBI:15361"/>
    </ligand>
</feature>
<feature type="binding site" evidence="2">
    <location>
        <position position="116"/>
    </location>
    <ligand>
        <name>thiamine diphosphate</name>
        <dbReference type="ChEBI" id="CHEBI:58937"/>
        <note>ligand shared with beta subunit</note>
    </ligand>
</feature>
<feature type="binding site" evidence="2">
    <location>
        <position position="117"/>
    </location>
    <ligand>
        <name>pyruvate</name>
        <dbReference type="ChEBI" id="CHEBI:15361"/>
    </ligand>
</feature>
<feature type="binding site" evidence="2">
    <location>
        <position position="117"/>
    </location>
    <ligand>
        <name>thiamine diphosphate</name>
        <dbReference type="ChEBI" id="CHEBI:58937"/>
        <note>ligand shared with beta subunit</note>
    </ligand>
</feature>
<feature type="binding site" evidence="2">
    <location>
        <position position="165"/>
    </location>
    <ligand>
        <name>pyruvate</name>
        <dbReference type="ChEBI" id="CHEBI:15361"/>
    </ligand>
</feature>
<feature type="binding site" evidence="2">
    <location>
        <position position="165"/>
    </location>
    <ligand>
        <name>thiamine diphosphate</name>
        <dbReference type="ChEBI" id="CHEBI:58937"/>
        <note>ligand shared with beta subunit</note>
    </ligand>
</feature>
<feature type="binding site" evidence="2">
    <location>
        <position position="167"/>
    </location>
    <ligand>
        <name>pyruvate</name>
        <dbReference type="ChEBI" id="CHEBI:15361"/>
    </ligand>
</feature>
<feature type="binding site" evidence="2">
    <location>
        <position position="167"/>
    </location>
    <ligand>
        <name>thiamine diphosphate</name>
        <dbReference type="ChEBI" id="CHEBI:58937"/>
        <note>ligand shared with beta subunit</note>
    </ligand>
</feature>
<feature type="binding site" evidence="2">
    <location>
        <position position="196"/>
    </location>
    <ligand>
        <name>Mg(2+)</name>
        <dbReference type="ChEBI" id="CHEBI:18420"/>
    </ligand>
</feature>
<feature type="binding site" evidence="2">
    <location>
        <position position="196"/>
    </location>
    <ligand>
        <name>pyruvate</name>
        <dbReference type="ChEBI" id="CHEBI:15361"/>
    </ligand>
</feature>
<feature type="binding site" evidence="2">
    <location>
        <position position="196"/>
    </location>
    <ligand>
        <name>thiamine diphosphate</name>
        <dbReference type="ChEBI" id="CHEBI:58937"/>
        <note>ligand shared with beta subunit</note>
    </ligand>
</feature>
<feature type="binding site" evidence="2">
    <location>
        <position position="197"/>
    </location>
    <ligand>
        <name>pyruvate</name>
        <dbReference type="ChEBI" id="CHEBI:15361"/>
    </ligand>
</feature>
<feature type="binding site" evidence="2">
    <location>
        <position position="197"/>
    </location>
    <ligand>
        <name>thiamine diphosphate</name>
        <dbReference type="ChEBI" id="CHEBI:58937"/>
        <note>ligand shared with beta subunit</note>
    </ligand>
</feature>
<feature type="binding site" evidence="2">
    <location>
        <position position="198"/>
    </location>
    <ligand>
        <name>pyruvate</name>
        <dbReference type="ChEBI" id="CHEBI:15361"/>
    </ligand>
</feature>
<feature type="binding site" evidence="2">
    <location>
        <position position="198"/>
    </location>
    <ligand>
        <name>thiamine diphosphate</name>
        <dbReference type="ChEBI" id="CHEBI:58937"/>
        <note>ligand shared with beta subunit</note>
    </ligand>
</feature>
<feature type="binding site" evidence="2">
    <location>
        <position position="225"/>
    </location>
    <ligand>
        <name>Mg(2+)</name>
        <dbReference type="ChEBI" id="CHEBI:18420"/>
    </ligand>
</feature>
<feature type="binding site" evidence="2">
    <location>
        <position position="225"/>
    </location>
    <ligand>
        <name>pyruvate</name>
        <dbReference type="ChEBI" id="CHEBI:15361"/>
    </ligand>
</feature>
<feature type="binding site" evidence="2">
    <location>
        <position position="225"/>
    </location>
    <ligand>
        <name>thiamine diphosphate</name>
        <dbReference type="ChEBI" id="CHEBI:58937"/>
        <note>ligand shared with beta subunit</note>
    </ligand>
</feature>
<feature type="binding site" evidence="2">
    <location>
        <position position="227"/>
    </location>
    <ligand>
        <name>Mg(2+)</name>
        <dbReference type="ChEBI" id="CHEBI:18420"/>
    </ligand>
</feature>
<feature type="binding site" evidence="2">
    <location>
        <position position="227"/>
    </location>
    <ligand>
        <name>pyruvate</name>
        <dbReference type="ChEBI" id="CHEBI:15361"/>
    </ligand>
</feature>
<feature type="binding site" evidence="2">
    <location>
        <position position="291"/>
    </location>
    <ligand>
        <name>thiamine diphosphate</name>
        <dbReference type="ChEBI" id="CHEBI:58937"/>
        <note>ligand shared with beta subunit</note>
    </ligand>
</feature>
<feature type="sequence conflict" description="In Ref. 1; AAA86507." evidence="7" ref="1">
    <original>KL</original>
    <variation>NV</variation>
    <location>
        <begin position="83"/>
        <end position="84"/>
    </location>
</feature>
<feature type="sequence conflict" description="In Ref. 4; AAK26016." evidence="7" ref="4">
    <original>E</original>
    <variation>D</variation>
    <location>
        <position position="362"/>
    </location>
</feature>
<name>ODPA1_ARATH</name>
<comment type="function">
    <text>The pyruvate dehydrogenase complex catalyzes the overall conversion of pyruvate to acetyl-CoA and CO(2). It contains multiple copies of three enzymatic components: pyruvate dehydrogenase (E1), dihydrolipoamide acetyltransferase (E2) and lipoamide dehydrogenase (E3).</text>
</comment>
<comment type="catalytic activity">
    <reaction>
        <text>N(6)-[(R)-lipoyl]-L-lysyl-[protein] + pyruvate + H(+) = N(6)-[(R)-S(8)-acetyldihydrolipoyl]-L-lysyl-[protein] + CO2</text>
        <dbReference type="Rhea" id="RHEA:19189"/>
        <dbReference type="Rhea" id="RHEA-COMP:10474"/>
        <dbReference type="Rhea" id="RHEA-COMP:10478"/>
        <dbReference type="ChEBI" id="CHEBI:15361"/>
        <dbReference type="ChEBI" id="CHEBI:15378"/>
        <dbReference type="ChEBI" id="CHEBI:16526"/>
        <dbReference type="ChEBI" id="CHEBI:83099"/>
        <dbReference type="ChEBI" id="CHEBI:83111"/>
        <dbReference type="EC" id="1.2.4.1"/>
    </reaction>
</comment>
<comment type="cofactor">
    <cofactor evidence="2">
        <name>thiamine diphosphate</name>
        <dbReference type="ChEBI" id="CHEBI:58937"/>
    </cofactor>
    <cofactor evidence="2">
        <name>Mg(2+)</name>
        <dbReference type="ChEBI" id="CHEBI:18420"/>
    </cofactor>
</comment>
<comment type="activity regulation">
    <text evidence="1">E1 activity is regulated by phosphorylation (inactivation) and dephosphorylation (activation) of the alpha subunit.</text>
</comment>
<comment type="subunit">
    <text evidence="1">Tetramer of 2 alpha and 2 beta subunits.</text>
</comment>
<comment type="subcellular location">
    <subcellularLocation>
        <location evidence="4">Mitochondrion matrix</location>
    </subcellularLocation>
</comment>
<comment type="tissue specificity">
    <text evidence="6">Expressed in roots, rosettes and flowers.</text>
</comment>
<comment type="induction">
    <text evidence="5">Induced by cadmium.</text>
</comment>
<gene>
    <name type="primary">E1 ALPHA</name>
    <name type="ordered locus">At1g59900</name>
    <name type="ORF">F23H11.21</name>
</gene>
<keyword id="KW-0460">Magnesium</keyword>
<keyword id="KW-0479">Metal-binding</keyword>
<keyword id="KW-0496">Mitochondrion</keyword>
<keyword id="KW-0560">Oxidoreductase</keyword>
<keyword id="KW-0670">Pyruvate</keyword>
<keyword id="KW-1185">Reference proteome</keyword>
<keyword id="KW-0786">Thiamine pyrophosphate</keyword>
<keyword id="KW-0809">Transit peptide</keyword>
<proteinExistence type="evidence at protein level"/>
<sequence length="389" mass="43059">MALSRLSSRSNIITRPFSAAFSRLISTDTTPITIETSLPFTAHLCDPPSRSVESSSQELLDFFRTMALMRRMEIAADSLYKAKLIRGFCHLYDGQEAVAIGMEAAITKKDAIITAYRDHCIFLGRGGSLHEVFSELMGRQAGCSKGKGGSMHFYKKESSFYGGHGIVGAQVPLGCGIAFAQKYNKEEAVTFALYGDGAANQGQLFEALNISALWDLPAILVCENNHYGMGTAEWRAAKSPSYYKRGDYVPGLKVDGMDAFAVKQACKFAKQHALEKGPIILEMDTYRYHGHSMSDPGSTYRTRDEISGVRQERDPIERIKKLVLSHDLATEKELKDMEKEIRKEVDDAIAKAKDCPMPEPSELFTNVYVKGFGTESFGPDRKEVKASLP</sequence>
<evidence type="ECO:0000250" key="1"/>
<evidence type="ECO:0000250" key="2">
    <source>
        <dbReference type="UniProtKB" id="P08559"/>
    </source>
</evidence>
<evidence type="ECO:0000255" key="3"/>
<evidence type="ECO:0000269" key="4">
    <source>
    </source>
</evidence>
<evidence type="ECO:0000269" key="5">
    <source>
    </source>
</evidence>
<evidence type="ECO:0000269" key="6">
    <source>
    </source>
</evidence>
<evidence type="ECO:0000305" key="7"/>
<organism>
    <name type="scientific">Arabidopsis thaliana</name>
    <name type="common">Mouse-ear cress</name>
    <dbReference type="NCBI Taxonomy" id="3702"/>
    <lineage>
        <taxon>Eukaryota</taxon>
        <taxon>Viridiplantae</taxon>
        <taxon>Streptophyta</taxon>
        <taxon>Embryophyta</taxon>
        <taxon>Tracheophyta</taxon>
        <taxon>Spermatophyta</taxon>
        <taxon>Magnoliopsida</taxon>
        <taxon>eudicotyledons</taxon>
        <taxon>Gunneridae</taxon>
        <taxon>Pentapetalae</taxon>
        <taxon>rosids</taxon>
        <taxon>malvids</taxon>
        <taxon>Brassicales</taxon>
        <taxon>Brassicaceae</taxon>
        <taxon>Camelineae</taxon>
        <taxon>Arabidopsis</taxon>
    </lineage>
</organism>
<accession>P52901</accession>
<accession>Q9C5E3</accession>
<accession>Q9SXC2</accession>
<reference key="1">
    <citation type="journal article" date="1995" name="Gene">
        <title>The mitochondrial pyruvate dehydrogenase complex: nucleotide and deduced amino-acid sequences of a cDNA encoding the Arabidopsis thaliana E1 alpha-subunit.</title>
        <authorList>
            <person name="Luethy M.H."/>
            <person name="Miernyk J.A."/>
            <person name="Randall D.D."/>
        </authorList>
    </citation>
    <scope>NUCLEOTIDE SEQUENCE [MRNA]</scope>
    <scope>TISSUE SPECIFICITY</scope>
    <source>
        <strain>cv. Columbia</strain>
    </source>
</reference>
<reference key="2">
    <citation type="journal article" date="2000" name="Nature">
        <title>Sequence and analysis of chromosome 1 of the plant Arabidopsis thaliana.</title>
        <authorList>
            <person name="Theologis A."/>
            <person name="Ecker J.R."/>
            <person name="Palm C.J."/>
            <person name="Federspiel N.A."/>
            <person name="Kaul S."/>
            <person name="White O."/>
            <person name="Alonso J."/>
            <person name="Altafi H."/>
            <person name="Araujo R."/>
            <person name="Bowman C.L."/>
            <person name="Brooks S.Y."/>
            <person name="Buehler E."/>
            <person name="Chan A."/>
            <person name="Chao Q."/>
            <person name="Chen H."/>
            <person name="Cheuk R.F."/>
            <person name="Chin C.W."/>
            <person name="Chung M.K."/>
            <person name="Conn L."/>
            <person name="Conway A.B."/>
            <person name="Conway A.R."/>
            <person name="Creasy T.H."/>
            <person name="Dewar K."/>
            <person name="Dunn P."/>
            <person name="Etgu P."/>
            <person name="Feldblyum T.V."/>
            <person name="Feng J.-D."/>
            <person name="Fong B."/>
            <person name="Fujii C.Y."/>
            <person name="Gill J.E."/>
            <person name="Goldsmith A.D."/>
            <person name="Haas B."/>
            <person name="Hansen N.F."/>
            <person name="Hughes B."/>
            <person name="Huizar L."/>
            <person name="Hunter J.L."/>
            <person name="Jenkins J."/>
            <person name="Johnson-Hopson C."/>
            <person name="Khan S."/>
            <person name="Khaykin E."/>
            <person name="Kim C.J."/>
            <person name="Koo H.L."/>
            <person name="Kremenetskaia I."/>
            <person name="Kurtz D.B."/>
            <person name="Kwan A."/>
            <person name="Lam B."/>
            <person name="Langin-Hooper S."/>
            <person name="Lee A."/>
            <person name="Lee J.M."/>
            <person name="Lenz C.A."/>
            <person name="Li J.H."/>
            <person name="Li Y.-P."/>
            <person name="Lin X."/>
            <person name="Liu S.X."/>
            <person name="Liu Z.A."/>
            <person name="Luros J.S."/>
            <person name="Maiti R."/>
            <person name="Marziali A."/>
            <person name="Militscher J."/>
            <person name="Miranda M."/>
            <person name="Nguyen M."/>
            <person name="Nierman W.C."/>
            <person name="Osborne B.I."/>
            <person name="Pai G."/>
            <person name="Peterson J."/>
            <person name="Pham P.K."/>
            <person name="Rizzo M."/>
            <person name="Rooney T."/>
            <person name="Rowley D."/>
            <person name="Sakano H."/>
            <person name="Salzberg S.L."/>
            <person name="Schwartz J.R."/>
            <person name="Shinn P."/>
            <person name="Southwick A.M."/>
            <person name="Sun H."/>
            <person name="Tallon L.J."/>
            <person name="Tambunga G."/>
            <person name="Toriumi M.J."/>
            <person name="Town C.D."/>
            <person name="Utterback T."/>
            <person name="Van Aken S."/>
            <person name="Vaysberg M."/>
            <person name="Vysotskaia V.S."/>
            <person name="Walker M."/>
            <person name="Wu D."/>
            <person name="Yu G."/>
            <person name="Fraser C.M."/>
            <person name="Venter J.C."/>
            <person name="Davis R.W."/>
        </authorList>
    </citation>
    <scope>NUCLEOTIDE SEQUENCE [LARGE SCALE GENOMIC DNA]</scope>
    <source>
        <strain>cv. Columbia</strain>
    </source>
</reference>
<reference key="3">
    <citation type="journal article" date="2017" name="Plant J.">
        <title>Araport11: a complete reannotation of the Arabidopsis thaliana reference genome.</title>
        <authorList>
            <person name="Cheng C.Y."/>
            <person name="Krishnakumar V."/>
            <person name="Chan A.P."/>
            <person name="Thibaud-Nissen F."/>
            <person name="Schobel S."/>
            <person name="Town C.D."/>
        </authorList>
    </citation>
    <scope>GENOME REANNOTATION</scope>
    <source>
        <strain>cv. Columbia</strain>
    </source>
</reference>
<reference key="4">
    <citation type="journal article" date="2003" name="Science">
        <title>Empirical analysis of transcriptional activity in the Arabidopsis genome.</title>
        <authorList>
            <person name="Yamada K."/>
            <person name="Lim J."/>
            <person name="Dale J.M."/>
            <person name="Chen H."/>
            <person name="Shinn P."/>
            <person name="Palm C.J."/>
            <person name="Southwick A.M."/>
            <person name="Wu H.C."/>
            <person name="Kim C.J."/>
            <person name="Nguyen M."/>
            <person name="Pham P.K."/>
            <person name="Cheuk R.F."/>
            <person name="Karlin-Newmann G."/>
            <person name="Liu S.X."/>
            <person name="Lam B."/>
            <person name="Sakano H."/>
            <person name="Wu T."/>
            <person name="Yu G."/>
            <person name="Miranda M."/>
            <person name="Quach H.L."/>
            <person name="Tripp M."/>
            <person name="Chang C.H."/>
            <person name="Lee J.M."/>
            <person name="Toriumi M.J."/>
            <person name="Chan M.M."/>
            <person name="Tang C.C."/>
            <person name="Onodera C.S."/>
            <person name="Deng J.M."/>
            <person name="Akiyama K."/>
            <person name="Ansari Y."/>
            <person name="Arakawa T."/>
            <person name="Banh J."/>
            <person name="Banno F."/>
            <person name="Bowser L."/>
            <person name="Brooks S.Y."/>
            <person name="Carninci P."/>
            <person name="Chao Q."/>
            <person name="Choy N."/>
            <person name="Enju A."/>
            <person name="Goldsmith A.D."/>
            <person name="Gurjal M."/>
            <person name="Hansen N.F."/>
            <person name="Hayashizaki Y."/>
            <person name="Johnson-Hopson C."/>
            <person name="Hsuan V.W."/>
            <person name="Iida K."/>
            <person name="Karnes M."/>
            <person name="Khan S."/>
            <person name="Koesema E."/>
            <person name="Ishida J."/>
            <person name="Jiang P.X."/>
            <person name="Jones T."/>
            <person name="Kawai J."/>
            <person name="Kamiya A."/>
            <person name="Meyers C."/>
            <person name="Nakajima M."/>
            <person name="Narusaka M."/>
            <person name="Seki M."/>
            <person name="Sakurai T."/>
            <person name="Satou M."/>
            <person name="Tamse R."/>
            <person name="Vaysberg M."/>
            <person name="Wallender E.K."/>
            <person name="Wong C."/>
            <person name="Yamamura Y."/>
            <person name="Yuan S."/>
            <person name="Shinozaki K."/>
            <person name="Davis R.W."/>
            <person name="Theologis A."/>
            <person name="Ecker J.R."/>
        </authorList>
    </citation>
    <scope>NUCLEOTIDE SEQUENCE [LARGE SCALE MRNA]</scope>
    <source>
        <strain>cv. Columbia</strain>
    </source>
</reference>
<reference key="5">
    <citation type="submission" date="2002-03" db="EMBL/GenBank/DDBJ databases">
        <title>Full-length cDNA from Arabidopsis thaliana.</title>
        <authorList>
            <person name="Brover V.V."/>
            <person name="Troukhan M.E."/>
            <person name="Alexandrov N.A."/>
            <person name="Lu Y.-P."/>
            <person name="Flavell R.B."/>
            <person name="Feldmann K.A."/>
        </authorList>
    </citation>
    <scope>NUCLEOTIDE SEQUENCE [LARGE SCALE MRNA]</scope>
</reference>
<reference key="6">
    <citation type="journal article" date="2004" name="Plant Cell">
        <title>Experimental analysis of the Arabidopsis mitochondrial proteome highlights signaling and regulatory components, provides assessment of targeting prediction programs, and indicates plant-specific mitochondrial proteins.</title>
        <authorList>
            <person name="Heazlewood J.L."/>
            <person name="Tonti-Filippini J.S."/>
            <person name="Gout A.M."/>
            <person name="Day D.A."/>
            <person name="Whelan J."/>
            <person name="Millar A.H."/>
        </authorList>
    </citation>
    <scope>IDENTIFICATION BY MASS SPECTROMETRY</scope>
    <scope>SUBCELLULAR LOCATION [LARGE SCALE ANALYSIS]</scope>
    <source>
        <strain>cv. Landsberg erecta</strain>
    </source>
</reference>
<reference key="7">
    <citation type="journal article" date="2006" name="Proteomics">
        <title>The early responses of Arabidopsis thaliana cells to cadmium exposure explored by protein and metabolite profiling analyses.</title>
        <authorList>
            <person name="Sarry J.-E."/>
            <person name="Kuhn L."/>
            <person name="Ducruix C."/>
            <person name="Lafaye A."/>
            <person name="Junot C."/>
            <person name="Hugouvieux V."/>
            <person name="Jourdain A."/>
            <person name="Bastien O."/>
            <person name="Fievet J.B."/>
            <person name="Vailhen D."/>
            <person name="Amekraz B."/>
            <person name="Moulin C."/>
            <person name="Ezan E."/>
            <person name="Garin J."/>
            <person name="Bourguignon J."/>
        </authorList>
    </citation>
    <scope>INDUCTION BY CADMIUM</scope>
    <source>
        <strain>cv. Columbia</strain>
    </source>
</reference>
<reference key="8">
    <citation type="journal article" date="2007" name="Mol. Cell. Proteomics">
        <title>Multidimensional protein identification technology (MudPIT) analysis of ubiquitinated proteins in plants.</title>
        <authorList>
            <person name="Maor R."/>
            <person name="Jones A."/>
            <person name="Nuehse T.S."/>
            <person name="Studholme D.J."/>
            <person name="Peck S.C."/>
            <person name="Shirasu K."/>
        </authorList>
    </citation>
    <scope>IDENTIFICATION BY MASS SPECTROMETRY [LARGE SCALE ANALYSIS]</scope>
    <source>
        <strain>cv. Landsberg erecta</strain>
    </source>
</reference>
<protein>
    <recommendedName>
        <fullName>Pyruvate dehydrogenase E1 component subunit alpha-1, mitochondrial</fullName>
        <shortName>PDHE1-A</shortName>
        <ecNumber>1.2.4.1</ecNumber>
    </recommendedName>
</protein>